<keyword id="KW-1185">Reference proteome</keyword>
<keyword id="KW-0346">Stress response</keyword>
<dbReference type="EMBL" id="AL031187">
    <property type="protein sequence ID" value="CAA20197.1"/>
    <property type="status" value="ALT_SEQ"/>
    <property type="molecule type" value="Genomic_DNA"/>
</dbReference>
<dbReference type="EMBL" id="AL161554">
    <property type="protein sequence ID" value="CAB79131.1"/>
    <property type="status" value="ALT_SEQ"/>
    <property type="molecule type" value="Genomic_DNA"/>
</dbReference>
<dbReference type="EMBL" id="CP002687">
    <property type="protein sequence ID" value="AEE84439.1"/>
    <property type="molecule type" value="Genomic_DNA"/>
</dbReference>
<dbReference type="EMBL" id="AK118775">
    <property type="protein sequence ID" value="BAC43368.1"/>
    <property type="molecule type" value="mRNA"/>
</dbReference>
<dbReference type="PIR" id="T05174">
    <property type="entry name" value="T05174"/>
</dbReference>
<dbReference type="RefSeq" id="NP_567623.2">
    <property type="nucleotide sequence ID" value="NM_118250.5"/>
</dbReference>
<dbReference type="SMR" id="Q8GWL1"/>
<dbReference type="STRING" id="3702.Q8GWL1"/>
<dbReference type="MEROPS" id="S08.A32"/>
<dbReference type="PaxDb" id="3702-AT4G21320.1"/>
<dbReference type="ProteomicsDB" id="232151"/>
<dbReference type="DNASU" id="827880"/>
<dbReference type="EnsemblPlants" id="AT4G21320.1">
    <property type="protein sequence ID" value="AT4G21320.1"/>
    <property type="gene ID" value="AT4G21320"/>
</dbReference>
<dbReference type="GeneID" id="827880"/>
<dbReference type="Gramene" id="AT4G21320.1">
    <property type="protein sequence ID" value="AT4G21320.1"/>
    <property type="gene ID" value="AT4G21320"/>
</dbReference>
<dbReference type="KEGG" id="ath:AT4G21320"/>
<dbReference type="Araport" id="AT4G21320"/>
<dbReference type="TAIR" id="AT4G21320">
    <property type="gene designation" value="HSA32"/>
</dbReference>
<dbReference type="eggNOG" id="ENOG502RBUH">
    <property type="taxonomic scope" value="Eukaryota"/>
</dbReference>
<dbReference type="HOGENOM" id="CLU_062679_0_0_1"/>
<dbReference type="InParanoid" id="Q8GWL1"/>
<dbReference type="OMA" id="KNQQVEF"/>
<dbReference type="OrthoDB" id="47007at2759"/>
<dbReference type="PhylomeDB" id="Q8GWL1"/>
<dbReference type="PRO" id="PR:Q8GWL1"/>
<dbReference type="Proteomes" id="UP000006548">
    <property type="component" value="Chromosome 4"/>
</dbReference>
<dbReference type="ExpressionAtlas" id="Q8GWL1">
    <property type="expression patterns" value="baseline and differential"/>
</dbReference>
<dbReference type="GO" id="GO:0010286">
    <property type="term" value="P:heat acclimation"/>
    <property type="evidence" value="ECO:0000315"/>
    <property type="project" value="UniProtKB"/>
</dbReference>
<dbReference type="GO" id="GO:0010608">
    <property type="term" value="P:post-transcriptional regulation of gene expression"/>
    <property type="evidence" value="ECO:0000315"/>
    <property type="project" value="TAIR"/>
</dbReference>
<dbReference type="GO" id="GO:0009408">
    <property type="term" value="P:response to heat"/>
    <property type="evidence" value="ECO:0000314"/>
    <property type="project" value="UniProtKB"/>
</dbReference>
<dbReference type="FunFam" id="3.20.20.70:FF:000327">
    <property type="entry name" value="At4g21320p-like protein"/>
    <property type="match status" value="1"/>
</dbReference>
<dbReference type="Gene3D" id="3.20.20.70">
    <property type="entry name" value="Aldolase class I"/>
    <property type="match status" value="1"/>
</dbReference>
<dbReference type="InterPro" id="IPR013785">
    <property type="entry name" value="Aldolase_TIM"/>
</dbReference>
<dbReference type="InterPro" id="IPR003830">
    <property type="entry name" value="ComA_synth"/>
</dbReference>
<dbReference type="InterPro" id="IPR036112">
    <property type="entry name" value="ComA_synth_sf"/>
</dbReference>
<dbReference type="PANTHER" id="PTHR48413">
    <property type="match status" value="1"/>
</dbReference>
<dbReference type="PANTHER" id="PTHR48413:SF1">
    <property type="entry name" value="PROTEIN HEAT-STRESS-ASSOCIATED 32"/>
    <property type="match status" value="1"/>
</dbReference>
<dbReference type="Pfam" id="PF02679">
    <property type="entry name" value="ComA"/>
    <property type="match status" value="1"/>
</dbReference>
<dbReference type="SUPFAM" id="SSF102110">
    <property type="entry name" value="(2r)-phospho-3-sulfolactate synthase ComA"/>
    <property type="match status" value="1"/>
</dbReference>
<sequence length="286" mass="32640">MAAYYRWKSFEENEDRPEKPRRYGVTEMRGPHYSVLSQNLLQEIFESMGQFVDGLKFSGGSNSLIPKSFIKQAIEMAHEHGVYVSTGDWAEHMLRSGPSAFKDYVEECKQLGFDTIELNANLLEVPEETLLRYVRLIKNGGLRAKPMFAVKFNKSDIPGRNRAFGSYVVPEPRSSEFVEDIDLLIRKAERCLEAGADTIMIDADDVCKYADSLRADIIAKVIGRLGIEKTMFEASDAKLVEWFIKRYGPNVNLYVDHSQIMDLECLRGRHLGKDHQSVLSSSYFLF</sequence>
<name>HSA32_ARATH</name>
<organism>
    <name type="scientific">Arabidopsis thaliana</name>
    <name type="common">Mouse-ear cress</name>
    <dbReference type="NCBI Taxonomy" id="3702"/>
    <lineage>
        <taxon>Eukaryota</taxon>
        <taxon>Viridiplantae</taxon>
        <taxon>Streptophyta</taxon>
        <taxon>Embryophyta</taxon>
        <taxon>Tracheophyta</taxon>
        <taxon>Spermatophyta</taxon>
        <taxon>Magnoliopsida</taxon>
        <taxon>eudicotyledons</taxon>
        <taxon>Gunneridae</taxon>
        <taxon>Pentapetalae</taxon>
        <taxon>rosids</taxon>
        <taxon>malvids</taxon>
        <taxon>Brassicales</taxon>
        <taxon>Brassicaceae</taxon>
        <taxon>Camelineae</taxon>
        <taxon>Arabidopsis</taxon>
    </lineage>
</organism>
<comment type="function">
    <text evidence="1 2">Transactivator required, together with HSP101, for long-term acquired thermotolerance (LAT) maintenance, probably by regulating heat-inducible genes expression, thus being a cellular component of thermomemory.</text>
</comment>
<comment type="induction">
    <text evidence="1 3 4">Accumulates after heat shock (HS) (PubMed:16500991, PubMed:23073024). Enhanced translation during recovery after heat treatment mediated by CLPB1 in a positive feedback loop (PubMed:23439916).</text>
</comment>
<comment type="disruption phenotype">
    <text evidence="1 2 4">Normal growth and development under nonstress conditions. Compromised acquired thermotolerance following a long recovery period (&gt; 24 h) after acclimation heat shock (HS) treatment, but normal when challenged within a short recovery period (PubMed:16500991, PubMed:17085506). Reduced expression of several highly heat-inducible genes. Slight increased in sensitivity to HS without acclimation (PubMed:17085506). Faster degradation of HSP101 (PubMed:23439916).</text>
</comment>
<comment type="similarity">
    <text evidence="6">Belongs to the phosphosulfolactate synthase family.</text>
</comment>
<comment type="sequence caution" evidence="6">
    <conflict type="erroneous gene model prediction">
        <sequence resource="EMBL-CDS" id="CAA20197"/>
    </conflict>
    <text>The predicted gene At4g21320 has been split into 3 genes: At4g21320, At4g21323 and At4g21326.</text>
</comment>
<comment type="sequence caution" evidence="6">
    <conflict type="erroneous gene model prediction">
        <sequence resource="EMBL-CDS" id="CAB79131"/>
    </conflict>
    <text>The predicted gene At4g21320 has been split into 3 genes: At4g21320, At4g21323 and At4g21326.</text>
</comment>
<proteinExistence type="evidence at transcript level"/>
<feature type="chain" id="PRO_0000435166" description="Protein HEAT-STRESS-ASSOCIATED 32">
    <location>
        <begin position="1"/>
        <end position="286"/>
    </location>
</feature>
<accession>Q8GWL1</accession>
<accession>O81899</accession>
<evidence type="ECO:0000269" key="1">
    <source>
    </source>
</evidence>
<evidence type="ECO:0000269" key="2">
    <source>
    </source>
</evidence>
<evidence type="ECO:0000269" key="3">
    <source>
    </source>
</evidence>
<evidence type="ECO:0000269" key="4">
    <source>
    </source>
</evidence>
<evidence type="ECO:0000303" key="5">
    <source>
    </source>
</evidence>
<evidence type="ECO:0000305" key="6"/>
<evidence type="ECO:0000312" key="7">
    <source>
        <dbReference type="Araport" id="AT4G21320"/>
    </source>
</evidence>
<evidence type="ECO:0000312" key="8">
    <source>
        <dbReference type="EMBL" id="CAA20197.1"/>
    </source>
</evidence>
<protein>
    <recommendedName>
        <fullName evidence="5">Protein HEAT-STRESS-ASSOCIATED 32</fullName>
        <shortName evidence="5">Heat-stress-associated 32-kDa protein</shortName>
    </recommendedName>
</protein>
<gene>
    <name evidence="5" type="primary">HSA32</name>
    <name evidence="7" type="ordered locus">At4g21320</name>
    <name evidence="8" type="ORF">T6K22.50</name>
</gene>
<reference key="1">
    <citation type="journal article" date="1999" name="Nature">
        <title>Sequence and analysis of chromosome 4 of the plant Arabidopsis thaliana.</title>
        <authorList>
            <person name="Mayer K.F.X."/>
            <person name="Schueller C."/>
            <person name="Wambutt R."/>
            <person name="Murphy G."/>
            <person name="Volckaert G."/>
            <person name="Pohl T."/>
            <person name="Duesterhoeft A."/>
            <person name="Stiekema W."/>
            <person name="Entian K.-D."/>
            <person name="Terryn N."/>
            <person name="Harris B."/>
            <person name="Ansorge W."/>
            <person name="Brandt P."/>
            <person name="Grivell L.A."/>
            <person name="Rieger M."/>
            <person name="Weichselgartner M."/>
            <person name="de Simone V."/>
            <person name="Obermaier B."/>
            <person name="Mache R."/>
            <person name="Mueller M."/>
            <person name="Kreis M."/>
            <person name="Delseny M."/>
            <person name="Puigdomenech P."/>
            <person name="Watson M."/>
            <person name="Schmidtheini T."/>
            <person name="Reichert B."/>
            <person name="Portetelle D."/>
            <person name="Perez-Alonso M."/>
            <person name="Boutry M."/>
            <person name="Bancroft I."/>
            <person name="Vos P."/>
            <person name="Hoheisel J."/>
            <person name="Zimmermann W."/>
            <person name="Wedler H."/>
            <person name="Ridley P."/>
            <person name="Langham S.-A."/>
            <person name="McCullagh B."/>
            <person name="Bilham L."/>
            <person name="Robben J."/>
            <person name="van der Schueren J."/>
            <person name="Grymonprez B."/>
            <person name="Chuang Y.-J."/>
            <person name="Vandenbussche F."/>
            <person name="Braeken M."/>
            <person name="Weltjens I."/>
            <person name="Voet M."/>
            <person name="Bastiaens I."/>
            <person name="Aert R."/>
            <person name="Defoor E."/>
            <person name="Weitzenegger T."/>
            <person name="Bothe G."/>
            <person name="Ramsperger U."/>
            <person name="Hilbert H."/>
            <person name="Braun M."/>
            <person name="Holzer E."/>
            <person name="Brandt A."/>
            <person name="Peters S."/>
            <person name="van Staveren M."/>
            <person name="Dirkse W."/>
            <person name="Mooijman P."/>
            <person name="Klein Lankhorst R."/>
            <person name="Rose M."/>
            <person name="Hauf J."/>
            <person name="Koetter P."/>
            <person name="Berneiser S."/>
            <person name="Hempel S."/>
            <person name="Feldpausch M."/>
            <person name="Lamberth S."/>
            <person name="Van den Daele H."/>
            <person name="De Keyser A."/>
            <person name="Buysshaert C."/>
            <person name="Gielen J."/>
            <person name="Villarroel R."/>
            <person name="De Clercq R."/>
            <person name="van Montagu M."/>
            <person name="Rogers J."/>
            <person name="Cronin A."/>
            <person name="Quail M.A."/>
            <person name="Bray-Allen S."/>
            <person name="Clark L."/>
            <person name="Doggett J."/>
            <person name="Hall S."/>
            <person name="Kay M."/>
            <person name="Lennard N."/>
            <person name="McLay K."/>
            <person name="Mayes R."/>
            <person name="Pettett A."/>
            <person name="Rajandream M.A."/>
            <person name="Lyne M."/>
            <person name="Benes V."/>
            <person name="Rechmann S."/>
            <person name="Borkova D."/>
            <person name="Bloecker H."/>
            <person name="Scharfe M."/>
            <person name="Grimm M."/>
            <person name="Loehnert T.-H."/>
            <person name="Dose S."/>
            <person name="de Haan M."/>
            <person name="Maarse A.C."/>
            <person name="Schaefer M."/>
            <person name="Mueller-Auer S."/>
            <person name="Gabel C."/>
            <person name="Fuchs M."/>
            <person name="Fartmann B."/>
            <person name="Granderath K."/>
            <person name="Dauner D."/>
            <person name="Herzl A."/>
            <person name="Neumann S."/>
            <person name="Argiriou A."/>
            <person name="Vitale D."/>
            <person name="Liguori R."/>
            <person name="Piravandi E."/>
            <person name="Massenet O."/>
            <person name="Quigley F."/>
            <person name="Clabauld G."/>
            <person name="Muendlein A."/>
            <person name="Felber R."/>
            <person name="Schnabl S."/>
            <person name="Hiller R."/>
            <person name="Schmidt W."/>
            <person name="Lecharny A."/>
            <person name="Aubourg S."/>
            <person name="Chefdor F."/>
            <person name="Cooke R."/>
            <person name="Berger C."/>
            <person name="Monfort A."/>
            <person name="Casacuberta E."/>
            <person name="Gibbons T."/>
            <person name="Weber N."/>
            <person name="Vandenbol M."/>
            <person name="Bargues M."/>
            <person name="Terol J."/>
            <person name="Torres A."/>
            <person name="Perez-Perez A."/>
            <person name="Purnelle B."/>
            <person name="Bent E."/>
            <person name="Johnson S."/>
            <person name="Tacon D."/>
            <person name="Jesse T."/>
            <person name="Heijnen L."/>
            <person name="Schwarz S."/>
            <person name="Scholler P."/>
            <person name="Heber S."/>
            <person name="Francs P."/>
            <person name="Bielke C."/>
            <person name="Frishman D."/>
            <person name="Haase D."/>
            <person name="Lemcke K."/>
            <person name="Mewes H.-W."/>
            <person name="Stocker S."/>
            <person name="Zaccaria P."/>
            <person name="Bevan M."/>
            <person name="Wilson R.K."/>
            <person name="de la Bastide M."/>
            <person name="Habermann K."/>
            <person name="Parnell L."/>
            <person name="Dedhia N."/>
            <person name="Gnoj L."/>
            <person name="Schutz K."/>
            <person name="Huang E."/>
            <person name="Spiegel L."/>
            <person name="Sekhon M."/>
            <person name="Murray J."/>
            <person name="Sheet P."/>
            <person name="Cordes M."/>
            <person name="Abu-Threideh J."/>
            <person name="Stoneking T."/>
            <person name="Kalicki J."/>
            <person name="Graves T."/>
            <person name="Harmon G."/>
            <person name="Edwards J."/>
            <person name="Latreille P."/>
            <person name="Courtney L."/>
            <person name="Cloud J."/>
            <person name="Abbott A."/>
            <person name="Scott K."/>
            <person name="Johnson D."/>
            <person name="Minx P."/>
            <person name="Bentley D."/>
            <person name="Fulton B."/>
            <person name="Miller N."/>
            <person name="Greco T."/>
            <person name="Kemp K."/>
            <person name="Kramer J."/>
            <person name="Fulton L."/>
            <person name="Mardis E."/>
            <person name="Dante M."/>
            <person name="Pepin K."/>
            <person name="Hillier L.W."/>
            <person name="Nelson J."/>
            <person name="Spieth J."/>
            <person name="Ryan E."/>
            <person name="Andrews S."/>
            <person name="Geisel C."/>
            <person name="Layman D."/>
            <person name="Du H."/>
            <person name="Ali J."/>
            <person name="Berghoff A."/>
            <person name="Jones K."/>
            <person name="Drone K."/>
            <person name="Cotton M."/>
            <person name="Joshu C."/>
            <person name="Antonoiu B."/>
            <person name="Zidanic M."/>
            <person name="Strong C."/>
            <person name="Sun H."/>
            <person name="Lamar B."/>
            <person name="Yordan C."/>
            <person name="Ma P."/>
            <person name="Zhong J."/>
            <person name="Preston R."/>
            <person name="Vil D."/>
            <person name="Shekher M."/>
            <person name="Matero A."/>
            <person name="Shah R."/>
            <person name="Swaby I.K."/>
            <person name="O'Shaughnessy A."/>
            <person name="Rodriguez M."/>
            <person name="Hoffman J."/>
            <person name="Till S."/>
            <person name="Granat S."/>
            <person name="Shohdy N."/>
            <person name="Hasegawa A."/>
            <person name="Hameed A."/>
            <person name="Lodhi M."/>
            <person name="Johnson A."/>
            <person name="Chen E."/>
            <person name="Marra M.A."/>
            <person name="Martienssen R."/>
            <person name="McCombie W.R."/>
        </authorList>
    </citation>
    <scope>NUCLEOTIDE SEQUENCE [LARGE SCALE GENOMIC DNA]</scope>
    <source>
        <strain>cv. Columbia</strain>
    </source>
</reference>
<reference key="2">
    <citation type="journal article" date="2017" name="Plant J.">
        <title>Araport11: a complete reannotation of the Arabidopsis thaliana reference genome.</title>
        <authorList>
            <person name="Cheng C.Y."/>
            <person name="Krishnakumar V."/>
            <person name="Chan A.P."/>
            <person name="Thibaud-Nissen F."/>
            <person name="Schobel S."/>
            <person name="Town C.D."/>
        </authorList>
    </citation>
    <scope>GENOME REANNOTATION</scope>
    <source>
        <strain>cv. Columbia</strain>
    </source>
</reference>
<reference key="3">
    <citation type="journal article" date="2002" name="Science">
        <title>Functional annotation of a full-length Arabidopsis cDNA collection.</title>
        <authorList>
            <person name="Seki M."/>
            <person name="Narusaka M."/>
            <person name="Kamiya A."/>
            <person name="Ishida J."/>
            <person name="Satou M."/>
            <person name="Sakurai T."/>
            <person name="Nakajima M."/>
            <person name="Enju A."/>
            <person name="Akiyama K."/>
            <person name="Oono Y."/>
            <person name="Muramatsu M."/>
            <person name="Hayashizaki Y."/>
            <person name="Kawai J."/>
            <person name="Carninci P."/>
            <person name="Itoh M."/>
            <person name="Ishii Y."/>
            <person name="Arakawa T."/>
            <person name="Shibata K."/>
            <person name="Shinagawa A."/>
            <person name="Shinozaki K."/>
        </authorList>
    </citation>
    <scope>NUCLEOTIDE SEQUENCE [LARGE SCALE MRNA]</scope>
    <source>
        <strain>cv. Columbia</strain>
    </source>
</reference>
<reference key="4">
    <citation type="journal article" date="2006" name="Plant Physiol.">
        <title>Arabidopsis Hsa32, a novel heat shock protein, is essential for acquired thermotolerance during long recovery after acclimation.</title>
        <authorList>
            <person name="Charng Y.-Y."/>
            <person name="Liu H.-C."/>
            <person name="Liu N.-Y."/>
            <person name="Hsu F.-C."/>
            <person name="Ko S.-S."/>
        </authorList>
    </citation>
    <scope>FUNCTION</scope>
    <scope>DISRUPTION PHENOTYPE</scope>
    <scope>INDUCTION BY HEAT SHOCK</scope>
    <source>
        <strain>cv. Columbia</strain>
    </source>
</reference>
<reference key="5">
    <citation type="journal article" date="2007" name="Plant Physiol.">
        <title>A heat-inducible transcription factor, HsfA2, is required for extension of acquired thermotolerance in Arabidopsis.</title>
        <authorList>
            <person name="Charng Y.-Y."/>
            <person name="Liu H.-C."/>
            <person name="Liu N.-Y."/>
            <person name="Chi W.-T."/>
            <person name="Wang C.-N."/>
            <person name="Chang S.-H."/>
            <person name="Wang T.-T."/>
        </authorList>
    </citation>
    <scope>FUNCTION</scope>
    <scope>DISRUPTION PHENOTYPE</scope>
    <source>
        <strain>cv. Columbia</strain>
    </source>
</reference>
<reference key="6">
    <citation type="journal article" date="2012" name="Plant Signal. Behav.">
        <title>Arabidopsis NAC transcription factor JUNGBRUNNEN1 affects thermomemory-associated genes and enhances heat stress tolerance in primed and unprimed conditions.</title>
        <authorList>
            <person name="Shahnejat-Bushehri S."/>
            <person name="Mueller-Roeber B."/>
            <person name="Balazadeh S."/>
        </authorList>
    </citation>
    <scope>INDUCTION BY HEAT SHOCK</scope>
</reference>
<reference key="7">
    <citation type="journal article" date="2013" name="Plant Physiol.">
        <title>Interplay between heat shock proteins HSP101 and HSA32 prolongs heat acclimation memory posttranscriptionally in Arabidopsis.</title>
        <authorList>
            <person name="Wu T.-Y."/>
            <person name="Juan Y.-T."/>
            <person name="Hsu Y.-H."/>
            <person name="Wu S.-H."/>
            <person name="Liao H.-T."/>
            <person name="Fung R.W.M."/>
            <person name="Charng Y.-Y."/>
        </authorList>
    </citation>
    <scope>FUNCTION</scope>
    <scope>DISRUPTION PHENOTYPE</scope>
    <scope>INDUCTION BY CLPB1</scope>
    <source>
        <strain>cv. Columbia</strain>
    </source>
</reference>